<accession>Q867B1</accession>
<feature type="signal peptide" evidence="1">
    <location>
        <begin position="1"/>
        <end position="26"/>
    </location>
</feature>
<feature type="chain" id="PRO_0000008400" description="Erythropoietin">
    <location>
        <begin position="27"/>
        <end position="192"/>
    </location>
</feature>
<feature type="glycosylation site" description="N-linked (GlcNAc...) asparagine" evidence="3">
    <location>
        <position position="50"/>
    </location>
</feature>
<feature type="glycosylation site" description="N-linked (GlcNAc...) asparagine" evidence="3">
    <location>
        <position position="64"/>
    </location>
</feature>
<feature type="glycosylation site" description="N-linked (GlcNAc...) asparagine" evidence="3">
    <location>
        <position position="109"/>
    </location>
</feature>
<feature type="disulfide bond" evidence="1">
    <location>
        <begin position="33"/>
        <end position="187"/>
    </location>
</feature>
<feature type="disulfide bond" evidence="1">
    <location>
        <begin position="55"/>
        <end position="59"/>
    </location>
</feature>
<name>EPO_HORSE</name>
<gene>
    <name type="primary">EPO</name>
</gene>
<sequence length="192" mass="20984">MGVRECPALLLLLSLLLPPLGLPALGAPPRLICDSRVLERYILEAREAENVTMGCAEGCSFGENVTVPDTKVNFYSWKRMEVEQQAVEVWQGLALLSEAILQGQALLANSSQPSETLRLHVDKAVSSLRSLTSLLRALGAQKEAISPPDAASAAPLRTFAVDTLCKLFRIYSNFLRGKLKLYTGEACRRGDR</sequence>
<dbReference type="EMBL" id="AB100030">
    <property type="protein sequence ID" value="BAC55239.1"/>
    <property type="molecule type" value="mRNA"/>
</dbReference>
<dbReference type="RefSeq" id="NP_001075294.1">
    <property type="nucleotide sequence ID" value="NM_001081825.2"/>
</dbReference>
<dbReference type="SMR" id="Q867B1"/>
<dbReference type="FunCoup" id="Q867B1">
    <property type="interactions" value="133"/>
</dbReference>
<dbReference type="STRING" id="9796.ENSECAP00000037030"/>
<dbReference type="GlyCosmos" id="Q867B1">
    <property type="glycosylation" value="3 sites, No reported glycans"/>
</dbReference>
<dbReference type="PaxDb" id="9796-ENSECAP00000037030"/>
<dbReference type="GeneID" id="100033849"/>
<dbReference type="KEGG" id="ecb:100033849"/>
<dbReference type="CTD" id="2056"/>
<dbReference type="InParanoid" id="Q867B1"/>
<dbReference type="OrthoDB" id="9892121at2759"/>
<dbReference type="Proteomes" id="UP000002281">
    <property type="component" value="Chromosome 13"/>
</dbReference>
<dbReference type="Bgee" id="ENSECAG00000010733">
    <property type="expression patterns" value="Expressed in bone marrow and 8 other cell types or tissues"/>
</dbReference>
<dbReference type="ExpressionAtlas" id="Q867B1">
    <property type="expression patterns" value="baseline"/>
</dbReference>
<dbReference type="GO" id="GO:0005615">
    <property type="term" value="C:extracellular space"/>
    <property type="evidence" value="ECO:0000318"/>
    <property type="project" value="GO_Central"/>
</dbReference>
<dbReference type="GO" id="GO:0005125">
    <property type="term" value="F:cytokine activity"/>
    <property type="evidence" value="ECO:0000318"/>
    <property type="project" value="GO_Central"/>
</dbReference>
<dbReference type="GO" id="GO:0005128">
    <property type="term" value="F:erythropoietin receptor binding"/>
    <property type="evidence" value="ECO:0000250"/>
    <property type="project" value="UniProtKB"/>
</dbReference>
<dbReference type="GO" id="GO:0005179">
    <property type="term" value="F:hormone activity"/>
    <property type="evidence" value="ECO:0007669"/>
    <property type="project" value="UniProtKB-KW"/>
</dbReference>
<dbReference type="GO" id="GO:0030295">
    <property type="term" value="F:protein kinase activator activity"/>
    <property type="evidence" value="ECO:0000318"/>
    <property type="project" value="GO_Central"/>
</dbReference>
<dbReference type="GO" id="GO:0030218">
    <property type="term" value="P:erythrocyte differentiation"/>
    <property type="evidence" value="ECO:0000250"/>
    <property type="project" value="UniProtKB"/>
</dbReference>
<dbReference type="GO" id="GO:0043249">
    <property type="term" value="P:erythrocyte maturation"/>
    <property type="evidence" value="ECO:0007669"/>
    <property type="project" value="UniProtKB-KW"/>
</dbReference>
<dbReference type="GO" id="GO:0038162">
    <property type="term" value="P:erythropoietin-mediated signaling pathway"/>
    <property type="evidence" value="ECO:0000250"/>
    <property type="project" value="UniProtKB"/>
</dbReference>
<dbReference type="GO" id="GO:0008284">
    <property type="term" value="P:positive regulation of cell population proliferation"/>
    <property type="evidence" value="ECO:0000318"/>
    <property type="project" value="GO_Central"/>
</dbReference>
<dbReference type="GO" id="GO:0046579">
    <property type="term" value="P:positive regulation of Ras protein signal transduction"/>
    <property type="evidence" value="ECO:0000318"/>
    <property type="project" value="GO_Central"/>
</dbReference>
<dbReference type="FunFam" id="1.20.1250.10:FF:000013">
    <property type="entry name" value="Erythropoietin"/>
    <property type="match status" value="1"/>
</dbReference>
<dbReference type="Gene3D" id="1.20.1250.10">
    <property type="match status" value="1"/>
</dbReference>
<dbReference type="InterPro" id="IPR009079">
    <property type="entry name" value="4_helix_cytokine-like_core"/>
</dbReference>
<dbReference type="InterPro" id="IPR019767">
    <property type="entry name" value="EPO/TPO_CS"/>
</dbReference>
<dbReference type="InterPro" id="IPR001323">
    <property type="entry name" value="EPO_TPO"/>
</dbReference>
<dbReference type="InterPro" id="IPR003013">
    <property type="entry name" value="Erythroptn"/>
</dbReference>
<dbReference type="PANTHER" id="PTHR10370">
    <property type="entry name" value="ERYTHROPOIETIN"/>
    <property type="match status" value="1"/>
</dbReference>
<dbReference type="PANTHER" id="PTHR10370:SF0">
    <property type="entry name" value="ERYTHROPOIETIN"/>
    <property type="match status" value="1"/>
</dbReference>
<dbReference type="Pfam" id="PF00758">
    <property type="entry name" value="EPO_TPO"/>
    <property type="match status" value="1"/>
</dbReference>
<dbReference type="PIRSF" id="PIRSF001951">
    <property type="entry name" value="EPO"/>
    <property type="match status" value="1"/>
</dbReference>
<dbReference type="PRINTS" id="PR00272">
    <property type="entry name" value="ERYTHROPTN"/>
</dbReference>
<dbReference type="SUPFAM" id="SSF47266">
    <property type="entry name" value="4-helical cytokines"/>
    <property type="match status" value="1"/>
</dbReference>
<dbReference type="PROSITE" id="PS00817">
    <property type="entry name" value="EPO_TPO"/>
    <property type="match status" value="1"/>
</dbReference>
<proteinExistence type="evidence at transcript level"/>
<evidence type="ECO:0000250" key="1"/>
<evidence type="ECO:0000250" key="2">
    <source>
        <dbReference type="UniProtKB" id="P01588"/>
    </source>
</evidence>
<evidence type="ECO:0000255" key="3"/>
<evidence type="ECO:0000305" key="4"/>
<reference key="1">
    <citation type="journal article" date="2004" name="Am. J. Vet. Res.">
        <title>Nucleotide sequence of equine erythropoietin and characterization of region-specific antibodies.</title>
        <authorList>
            <person name="Sato F."/>
            <person name="Yamashita S."/>
            <person name="Kugo T."/>
            <person name="Hasegawa T."/>
            <person name="Mitsui I."/>
            <person name="Kijima-Suda I."/>
        </authorList>
    </citation>
    <scope>NUCLEOTIDE SEQUENCE [MRNA]</scope>
    <source>
        <tissue>Kidney</tissue>
    </source>
</reference>
<organism>
    <name type="scientific">Equus caballus</name>
    <name type="common">Horse</name>
    <dbReference type="NCBI Taxonomy" id="9796"/>
    <lineage>
        <taxon>Eukaryota</taxon>
        <taxon>Metazoa</taxon>
        <taxon>Chordata</taxon>
        <taxon>Craniata</taxon>
        <taxon>Vertebrata</taxon>
        <taxon>Euteleostomi</taxon>
        <taxon>Mammalia</taxon>
        <taxon>Eutheria</taxon>
        <taxon>Laurasiatheria</taxon>
        <taxon>Perissodactyla</taxon>
        <taxon>Equidae</taxon>
        <taxon>Equus</taxon>
    </lineage>
</organism>
<keyword id="KW-1015">Disulfide bond</keyword>
<keyword id="KW-0265">Erythrocyte maturation</keyword>
<keyword id="KW-0325">Glycoprotein</keyword>
<keyword id="KW-0372">Hormone</keyword>
<keyword id="KW-1185">Reference proteome</keyword>
<keyword id="KW-0964">Secreted</keyword>
<keyword id="KW-0732">Signal</keyword>
<protein>
    <recommendedName>
        <fullName>Erythropoietin</fullName>
    </recommendedName>
</protein>
<comment type="function">
    <text evidence="2">Hormone involved in the regulation of erythrocyte proliferation and differentiation and the maintenance of a physiological level of circulating erythrocyte mass. Binds to EPOR leading to EPOR dimerization and JAK2 activation thereby activating specific downstream effectors, including STAT1 and STAT3.</text>
</comment>
<comment type="subcellular location">
    <subcellularLocation>
        <location>Secreted</location>
    </subcellularLocation>
</comment>
<comment type="similarity">
    <text evidence="4">Belongs to the EPO/TPO family.</text>
</comment>